<evidence type="ECO:0000250" key="1"/>
<evidence type="ECO:0000255" key="2"/>
<evidence type="ECO:0000305" key="3"/>
<dbReference type="EMBL" id="X17095">
    <property type="protein sequence ID" value="CAA34950.1"/>
    <property type="molecule type" value="Genomic_DNA"/>
</dbReference>
<dbReference type="PIR" id="S07591">
    <property type="entry name" value="VCOMCN"/>
</dbReference>
<dbReference type="SMR" id="P14966"/>
<dbReference type="Proteomes" id="UP000008453">
    <property type="component" value="Genome"/>
</dbReference>
<dbReference type="GO" id="GO:0043657">
    <property type="term" value="C:host cell"/>
    <property type="evidence" value="ECO:0007669"/>
    <property type="project" value="GOC"/>
</dbReference>
<dbReference type="GO" id="GO:0042025">
    <property type="term" value="C:host cell nucleus"/>
    <property type="evidence" value="ECO:0007669"/>
    <property type="project" value="UniProtKB-SubCell"/>
</dbReference>
<dbReference type="GO" id="GO:0039615">
    <property type="term" value="C:T=1 icosahedral viral capsid"/>
    <property type="evidence" value="ECO:0007669"/>
    <property type="project" value="UniProtKB-KW"/>
</dbReference>
<dbReference type="GO" id="GO:0003677">
    <property type="term" value="F:DNA binding"/>
    <property type="evidence" value="ECO:0007669"/>
    <property type="project" value="UniProtKB-KW"/>
</dbReference>
<dbReference type="GO" id="GO:0005198">
    <property type="term" value="F:structural molecule activity"/>
    <property type="evidence" value="ECO:0007669"/>
    <property type="project" value="InterPro"/>
</dbReference>
<dbReference type="GO" id="GO:0008270">
    <property type="term" value="F:zinc ion binding"/>
    <property type="evidence" value="ECO:0007669"/>
    <property type="project" value="UniProtKB-KW"/>
</dbReference>
<dbReference type="GO" id="GO:0046718">
    <property type="term" value="P:symbiont entry into host cell"/>
    <property type="evidence" value="ECO:0007669"/>
    <property type="project" value="UniProtKB-KW"/>
</dbReference>
<dbReference type="GO" id="GO:0075732">
    <property type="term" value="P:viral penetration into host nucleus"/>
    <property type="evidence" value="ECO:0007669"/>
    <property type="project" value="UniProtKB-KW"/>
</dbReference>
<dbReference type="Gene3D" id="2.60.120.20">
    <property type="match status" value="1"/>
</dbReference>
<dbReference type="InterPro" id="IPR000650">
    <property type="entry name" value="Gem_coat_AR1"/>
</dbReference>
<dbReference type="InterPro" id="IPR000263">
    <property type="entry name" value="GV_A/BR1_coat"/>
</dbReference>
<dbReference type="InterPro" id="IPR029053">
    <property type="entry name" value="Viral_coat"/>
</dbReference>
<dbReference type="Pfam" id="PF00844">
    <property type="entry name" value="Gemini_coat"/>
    <property type="match status" value="1"/>
</dbReference>
<dbReference type="PRINTS" id="PR00224">
    <property type="entry name" value="GEMCOATAR1"/>
</dbReference>
<dbReference type="PRINTS" id="PR00223">
    <property type="entry name" value="GEMCOATARBR1"/>
</dbReference>
<organismHost>
    <name type="scientific">Hewittia sublobata</name>
    <dbReference type="NCBI Taxonomy" id="197394"/>
</organismHost>
<organismHost>
    <name type="scientific">Jatropha multifida</name>
    <name type="common">Coralbush</name>
    <dbReference type="NCBI Taxonomy" id="3996"/>
</organismHost>
<organismHost>
    <name type="scientific">Laportea</name>
    <dbReference type="NCBI Taxonomy" id="194268"/>
</organismHost>
<organismHost>
    <name type="scientific">Manihot esculenta</name>
    <name type="common">Cassava</name>
    <name type="synonym">Jatropha manihot</name>
    <dbReference type="NCBI Taxonomy" id="3983"/>
</organismHost>
<feature type="chain" id="PRO_0000222181" description="Capsid protein">
    <location>
        <begin position="1"/>
        <end position="258"/>
    </location>
</feature>
<feature type="zinc finger region" evidence="2">
    <location>
        <begin position="69"/>
        <end position="86"/>
    </location>
</feature>
<feature type="short sequence motif" description="Bipartite nuclear localization signal" evidence="2">
    <location>
        <begin position="3"/>
        <end position="20"/>
    </location>
</feature>
<feature type="short sequence motif" description="Nuclear localization signal" evidence="2">
    <location>
        <begin position="41"/>
        <end position="55"/>
    </location>
</feature>
<feature type="short sequence motif" description="Nuclear export signal" evidence="2">
    <location>
        <begin position="102"/>
        <end position="123"/>
    </location>
</feature>
<feature type="short sequence motif" description="Bipartite nuclear localization signal" evidence="2">
    <location>
        <begin position="202"/>
        <end position="249"/>
    </location>
</feature>
<name>CAPSD_CLVN</name>
<proteinExistence type="inferred from homology"/>
<keyword id="KW-0167">Capsid protein</keyword>
<keyword id="KW-0238">DNA-binding</keyword>
<keyword id="KW-1048">Host nucleus</keyword>
<keyword id="KW-0945">Host-virus interaction</keyword>
<keyword id="KW-0479">Metal-binding</keyword>
<keyword id="KW-1185">Reference proteome</keyword>
<keyword id="KW-1140">T=1 icosahedral capsid protein</keyword>
<keyword id="KW-1163">Viral penetration into host nucleus</keyword>
<keyword id="KW-0946">Virion</keyword>
<keyword id="KW-1160">Virus entry into host cell</keyword>
<keyword id="KW-0862">Zinc</keyword>
<keyword id="KW-0863">Zinc-finger</keyword>
<sequence>MSKRPGDIIISTPGSKVRRRLNFDSPYRNRATAPTVHVTNRKRAWMNRPMYRKPMMYRMYRSPDIPRGCEGPCKVQSFEQRDDVKHLGICKVISDVTRGPGLTHRVGKRFCIKSIYILGKIWMDENIKKQNHTNNVMFYLLRDRRPYGNTPQDFGQIFNMFDNEPSTATIENDLRDRFQVLRKFHATVIGGPSGMKEQALVKRFYRLNHHVTYNHQEAGKYENHTENALLLYMACTHASNPVYATLKIRIYFYDSIGN</sequence>
<reference key="1">
    <citation type="journal article" date="1990" name="Nucleic Acids Res.">
        <title>Nucleotide sequence of the infectious cloned DNA components of African cassava mosaic virus (Nigerian strain).</title>
        <authorList>
            <person name="Morris B."/>
            <person name="Coates L."/>
            <person name="Lowe S."/>
            <person name="Richardson K."/>
            <person name="Eddy P."/>
        </authorList>
    </citation>
    <scope>NUCLEOTIDE SEQUENCE [GENOMIC DNA]</scope>
</reference>
<protein>
    <recommendedName>
        <fullName>Capsid protein</fullName>
    </recommendedName>
    <alternativeName>
        <fullName>Coat protein</fullName>
        <shortName>CP</shortName>
    </alternativeName>
</protein>
<comment type="function">
    <text>Encapsidates the viral DNA into characteristic twinned ('geminate') particles. Binds the genomic viral ssDNA and shuttles it into and out of the cell nucleus. The CP of bipartite geminiviruses is not required for cell-to-cell or systemic movement.</text>
</comment>
<comment type="subunit">
    <text evidence="1">Homomultimer. Binds to single-stranded and double-stranded viral DNA. Interacts (via nuclear localization signals) with host importin alpha-1a (By similarity).</text>
</comment>
<comment type="subcellular location">
    <subcellularLocation>
        <location evidence="3">Virion</location>
    </subcellularLocation>
    <subcellularLocation>
        <location evidence="1">Host nucleus</location>
    </subcellularLocation>
    <text evidence="1">It is actively transported into the host cell nucleus. It may be exported out of the nucleus through a nuclear export signal for cell-to-cell movement and spread (By similarity).</text>
</comment>
<comment type="similarity">
    <text evidence="3">Belongs to the geminiviridae capsid protein family.</text>
</comment>
<gene>
    <name type="ORF">AR1</name>
    <name type="ORF">AV1</name>
</gene>
<organism>
    <name type="scientific">African cassava mosaic virus (isolate Nigerian)</name>
    <name type="common">ACMV</name>
    <name type="synonym">Cassava latent virus (isolate Nigerian)</name>
    <dbReference type="NCBI Taxonomy" id="222073"/>
    <lineage>
        <taxon>Viruses</taxon>
        <taxon>Monodnaviria</taxon>
        <taxon>Shotokuvirae</taxon>
        <taxon>Cressdnaviricota</taxon>
        <taxon>Repensiviricetes</taxon>
        <taxon>Geplafuvirales</taxon>
        <taxon>Geminiviridae</taxon>
        <taxon>Begomovirus</taxon>
        <taxon>Begomovirus manihotis</taxon>
    </lineage>
</organism>
<accession>P14966</accession>